<protein>
    <recommendedName>
        <fullName>von Willebrand factor C domain-containing protein 2-like</fullName>
    </recommendedName>
</protein>
<proteinExistence type="evidence at transcript level"/>
<dbReference type="EMBL" id="AB428728">
    <property type="protein sequence ID" value="BAH04287.1"/>
    <property type="molecule type" value="mRNA"/>
</dbReference>
<dbReference type="EMBL" id="CR753890">
    <property type="protein sequence ID" value="CAQ13566.1"/>
    <property type="molecule type" value="Genomic_DNA"/>
</dbReference>
<dbReference type="RefSeq" id="NP_001122036.1">
    <property type="nucleotide sequence ID" value="NM_001128564.1"/>
</dbReference>
<dbReference type="SMR" id="B0UZC8"/>
<dbReference type="FunCoup" id="B0UZC8">
    <property type="interactions" value="1965"/>
</dbReference>
<dbReference type="STRING" id="7955.ENSDARP00000115777"/>
<dbReference type="PaxDb" id="7955-ENSDARP00000115777"/>
<dbReference type="Ensembl" id="ENSDART00000132911">
    <property type="protein sequence ID" value="ENSDARP00000115777"/>
    <property type="gene ID" value="ENSDARG00000069134"/>
</dbReference>
<dbReference type="GeneID" id="100148652"/>
<dbReference type="KEGG" id="dre:100148652"/>
<dbReference type="AGR" id="ZFIN:ZDB-GENE-081104-169"/>
<dbReference type="CTD" id="402117"/>
<dbReference type="ZFIN" id="ZDB-GENE-081104-169">
    <property type="gene designation" value="vwc2l"/>
</dbReference>
<dbReference type="eggNOG" id="ENOG502RAAU">
    <property type="taxonomic scope" value="Eukaryota"/>
</dbReference>
<dbReference type="HOGENOM" id="CLU_100254_0_1_1"/>
<dbReference type="InParanoid" id="B0UZC8"/>
<dbReference type="OMA" id="PICKHGP"/>
<dbReference type="OrthoDB" id="8574072at2759"/>
<dbReference type="PhylomeDB" id="B0UZC8"/>
<dbReference type="TreeFam" id="TF329913"/>
<dbReference type="PRO" id="PR:B0UZC8"/>
<dbReference type="Proteomes" id="UP000000437">
    <property type="component" value="Chromosome 9"/>
</dbReference>
<dbReference type="Bgee" id="ENSDARG00000069134">
    <property type="expression patterns" value="Expressed in retina and 3 other cell types or tissues"/>
</dbReference>
<dbReference type="GO" id="GO:0032281">
    <property type="term" value="C:AMPA glutamate receptor complex"/>
    <property type="evidence" value="ECO:0000318"/>
    <property type="project" value="GO_Central"/>
</dbReference>
<dbReference type="GO" id="GO:0005615">
    <property type="term" value="C:extracellular space"/>
    <property type="evidence" value="ECO:0000318"/>
    <property type="project" value="GO_Central"/>
</dbReference>
<dbReference type="GO" id="GO:0045202">
    <property type="term" value="C:synapse"/>
    <property type="evidence" value="ECO:0007669"/>
    <property type="project" value="UniProtKB-SubCell"/>
</dbReference>
<dbReference type="GO" id="GO:0030514">
    <property type="term" value="P:negative regulation of BMP signaling pathway"/>
    <property type="evidence" value="ECO:0000318"/>
    <property type="project" value="GO_Central"/>
</dbReference>
<dbReference type="GO" id="GO:0007399">
    <property type="term" value="P:nervous system development"/>
    <property type="evidence" value="ECO:0000315"/>
    <property type="project" value="ZFIN"/>
</dbReference>
<dbReference type="Gene3D" id="6.20.200.20">
    <property type="match status" value="1"/>
</dbReference>
<dbReference type="InterPro" id="IPR042979">
    <property type="entry name" value="VWC2/VWC2L"/>
</dbReference>
<dbReference type="InterPro" id="IPR001007">
    <property type="entry name" value="VWF_dom"/>
</dbReference>
<dbReference type="PANTHER" id="PTHR46252">
    <property type="entry name" value="BRORIN FAMILY MEMBER"/>
    <property type="match status" value="1"/>
</dbReference>
<dbReference type="PANTHER" id="PTHR46252:SF2">
    <property type="entry name" value="VON WILLEBRAND FACTOR C DOMAIN-CONTAINING PROTEIN 2-LIKE"/>
    <property type="match status" value="1"/>
</dbReference>
<dbReference type="Pfam" id="PF23333">
    <property type="entry name" value="VWC2L_1st"/>
    <property type="match status" value="1"/>
</dbReference>
<dbReference type="Pfam" id="PF23334">
    <property type="entry name" value="VWC2L_2nd"/>
    <property type="match status" value="1"/>
</dbReference>
<dbReference type="Pfam" id="PF23331">
    <property type="entry name" value="VWC2L_C"/>
    <property type="match status" value="1"/>
</dbReference>
<dbReference type="SMART" id="SM00214">
    <property type="entry name" value="VWC"/>
    <property type="match status" value="2"/>
</dbReference>
<dbReference type="SUPFAM" id="SSF57603">
    <property type="entry name" value="FnI-like domain"/>
    <property type="match status" value="1"/>
</dbReference>
<dbReference type="PROSITE" id="PS01208">
    <property type="entry name" value="VWFC_1"/>
    <property type="match status" value="1"/>
</dbReference>
<dbReference type="PROSITE" id="PS50184">
    <property type="entry name" value="VWFC_2"/>
    <property type="match status" value="1"/>
</dbReference>
<accession>B0UZC8</accession>
<accession>B7X9K3</accession>
<name>VWC2L_DANRE</name>
<organism>
    <name type="scientific">Danio rerio</name>
    <name type="common">Zebrafish</name>
    <name type="synonym">Brachydanio rerio</name>
    <dbReference type="NCBI Taxonomy" id="7955"/>
    <lineage>
        <taxon>Eukaryota</taxon>
        <taxon>Metazoa</taxon>
        <taxon>Chordata</taxon>
        <taxon>Craniata</taxon>
        <taxon>Vertebrata</taxon>
        <taxon>Euteleostomi</taxon>
        <taxon>Actinopterygii</taxon>
        <taxon>Neopterygii</taxon>
        <taxon>Teleostei</taxon>
        <taxon>Ostariophysi</taxon>
        <taxon>Cypriniformes</taxon>
        <taxon>Danionidae</taxon>
        <taxon>Danioninae</taxon>
        <taxon>Danio</taxon>
    </lineage>
</organism>
<comment type="function">
    <text evidence="1 4">May play a role in bone differentiation and matrix mineralization (By similarity). May play a role in neural development.</text>
</comment>
<comment type="subcellular location">
    <subcellularLocation>
        <location evidence="1">Secreted</location>
    </subcellularLocation>
    <subcellularLocation>
        <location evidence="1">Synapse</location>
    </subcellularLocation>
</comment>
<comment type="developmental stage">
    <text evidence="4">At 36 hpf, expressed predominantlyin the brain, including several discrete regions in the forebrain, midbrain and hindbrain.</text>
</comment>
<reference key="1">
    <citation type="journal article" date="2009" name="FEBS Lett.">
        <title>A novel neural-specific BMP antagonist, Brorin-like, of the Chordin family.</title>
        <authorList>
            <person name="Miwa H."/>
            <person name="Miyake A."/>
            <person name="Kouta Y."/>
            <person name="Shimada A."/>
            <person name="Yamashita Y."/>
            <person name="Nakayama Y."/>
            <person name="Yamauchi H."/>
            <person name="Konishi M."/>
            <person name="Itoh N."/>
        </authorList>
    </citation>
    <scope>NUCLEOTIDE SEQUENCE [MRNA]</scope>
    <scope>FUNCTION</scope>
    <scope>DEVELOPMENTAL STAGE</scope>
</reference>
<reference key="2">
    <citation type="journal article" date="2013" name="Nature">
        <title>The zebrafish reference genome sequence and its relationship to the human genome.</title>
        <authorList>
            <person name="Howe K."/>
            <person name="Clark M.D."/>
            <person name="Torroja C.F."/>
            <person name="Torrance J."/>
            <person name="Berthelot C."/>
            <person name="Muffato M."/>
            <person name="Collins J.E."/>
            <person name="Humphray S."/>
            <person name="McLaren K."/>
            <person name="Matthews L."/>
            <person name="McLaren S."/>
            <person name="Sealy I."/>
            <person name="Caccamo M."/>
            <person name="Churcher C."/>
            <person name="Scott C."/>
            <person name="Barrett J.C."/>
            <person name="Koch R."/>
            <person name="Rauch G.J."/>
            <person name="White S."/>
            <person name="Chow W."/>
            <person name="Kilian B."/>
            <person name="Quintais L.T."/>
            <person name="Guerra-Assuncao J.A."/>
            <person name="Zhou Y."/>
            <person name="Gu Y."/>
            <person name="Yen J."/>
            <person name="Vogel J.H."/>
            <person name="Eyre T."/>
            <person name="Redmond S."/>
            <person name="Banerjee R."/>
            <person name="Chi J."/>
            <person name="Fu B."/>
            <person name="Langley E."/>
            <person name="Maguire S.F."/>
            <person name="Laird G.K."/>
            <person name="Lloyd D."/>
            <person name="Kenyon E."/>
            <person name="Donaldson S."/>
            <person name="Sehra H."/>
            <person name="Almeida-King J."/>
            <person name="Loveland J."/>
            <person name="Trevanion S."/>
            <person name="Jones M."/>
            <person name="Quail M."/>
            <person name="Willey D."/>
            <person name="Hunt A."/>
            <person name="Burton J."/>
            <person name="Sims S."/>
            <person name="McLay K."/>
            <person name="Plumb B."/>
            <person name="Davis J."/>
            <person name="Clee C."/>
            <person name="Oliver K."/>
            <person name="Clark R."/>
            <person name="Riddle C."/>
            <person name="Elliot D."/>
            <person name="Threadgold G."/>
            <person name="Harden G."/>
            <person name="Ware D."/>
            <person name="Begum S."/>
            <person name="Mortimore B."/>
            <person name="Kerry G."/>
            <person name="Heath P."/>
            <person name="Phillimore B."/>
            <person name="Tracey A."/>
            <person name="Corby N."/>
            <person name="Dunn M."/>
            <person name="Johnson C."/>
            <person name="Wood J."/>
            <person name="Clark S."/>
            <person name="Pelan S."/>
            <person name="Griffiths G."/>
            <person name="Smith M."/>
            <person name="Glithero R."/>
            <person name="Howden P."/>
            <person name="Barker N."/>
            <person name="Lloyd C."/>
            <person name="Stevens C."/>
            <person name="Harley J."/>
            <person name="Holt K."/>
            <person name="Panagiotidis G."/>
            <person name="Lovell J."/>
            <person name="Beasley H."/>
            <person name="Henderson C."/>
            <person name="Gordon D."/>
            <person name="Auger K."/>
            <person name="Wright D."/>
            <person name="Collins J."/>
            <person name="Raisen C."/>
            <person name="Dyer L."/>
            <person name="Leung K."/>
            <person name="Robertson L."/>
            <person name="Ambridge K."/>
            <person name="Leongamornlert D."/>
            <person name="McGuire S."/>
            <person name="Gilderthorp R."/>
            <person name="Griffiths C."/>
            <person name="Manthravadi D."/>
            <person name="Nichol S."/>
            <person name="Barker G."/>
            <person name="Whitehead S."/>
            <person name="Kay M."/>
            <person name="Brown J."/>
            <person name="Murnane C."/>
            <person name="Gray E."/>
            <person name="Humphries M."/>
            <person name="Sycamore N."/>
            <person name="Barker D."/>
            <person name="Saunders D."/>
            <person name="Wallis J."/>
            <person name="Babbage A."/>
            <person name="Hammond S."/>
            <person name="Mashreghi-Mohammadi M."/>
            <person name="Barr L."/>
            <person name="Martin S."/>
            <person name="Wray P."/>
            <person name="Ellington A."/>
            <person name="Matthews N."/>
            <person name="Ellwood M."/>
            <person name="Woodmansey R."/>
            <person name="Clark G."/>
            <person name="Cooper J."/>
            <person name="Tromans A."/>
            <person name="Grafham D."/>
            <person name="Skuce C."/>
            <person name="Pandian R."/>
            <person name="Andrews R."/>
            <person name="Harrison E."/>
            <person name="Kimberley A."/>
            <person name="Garnett J."/>
            <person name="Fosker N."/>
            <person name="Hall R."/>
            <person name="Garner P."/>
            <person name="Kelly D."/>
            <person name="Bird C."/>
            <person name="Palmer S."/>
            <person name="Gehring I."/>
            <person name="Berger A."/>
            <person name="Dooley C.M."/>
            <person name="Ersan-Urun Z."/>
            <person name="Eser C."/>
            <person name="Geiger H."/>
            <person name="Geisler M."/>
            <person name="Karotki L."/>
            <person name="Kirn A."/>
            <person name="Konantz J."/>
            <person name="Konantz M."/>
            <person name="Oberlander M."/>
            <person name="Rudolph-Geiger S."/>
            <person name="Teucke M."/>
            <person name="Lanz C."/>
            <person name="Raddatz G."/>
            <person name="Osoegawa K."/>
            <person name="Zhu B."/>
            <person name="Rapp A."/>
            <person name="Widaa S."/>
            <person name="Langford C."/>
            <person name="Yang F."/>
            <person name="Schuster S.C."/>
            <person name="Carter N.P."/>
            <person name="Harrow J."/>
            <person name="Ning Z."/>
            <person name="Herrero J."/>
            <person name="Searle S.M."/>
            <person name="Enright A."/>
            <person name="Geisler R."/>
            <person name="Plasterk R.H."/>
            <person name="Lee C."/>
            <person name="Westerfield M."/>
            <person name="de Jong P.J."/>
            <person name="Zon L.I."/>
            <person name="Postlethwait J.H."/>
            <person name="Nusslein-Volhard C."/>
            <person name="Hubbard T.J."/>
            <person name="Roest Crollius H."/>
            <person name="Rogers J."/>
            <person name="Stemple D.L."/>
        </authorList>
    </citation>
    <scope>NUCLEOTIDE SEQUENCE [LARGE SCALE GENOMIC DNA]</scope>
    <source>
        <strain>Tuebingen</strain>
    </source>
</reference>
<feature type="signal peptide" evidence="2">
    <location>
        <begin position="1"/>
        <end position="21"/>
    </location>
</feature>
<feature type="chain" id="PRO_0000348063" description="von Willebrand factor C domain-containing protein 2-like">
    <location>
        <begin position="22"/>
        <end position="223"/>
    </location>
</feature>
<feature type="domain" description="VWFC 1" evidence="3">
    <location>
        <begin position="51"/>
        <end position="110"/>
    </location>
</feature>
<feature type="domain" description="VWFC 2" evidence="3">
    <location>
        <begin position="114"/>
        <end position="172"/>
    </location>
</feature>
<gene>
    <name type="primary">vwc2l</name>
    <name type="ORF">si:ch211-207d8.1</name>
</gene>
<evidence type="ECO:0000250" key="1"/>
<evidence type="ECO:0000255" key="2"/>
<evidence type="ECO:0000255" key="3">
    <source>
        <dbReference type="PROSITE-ProRule" id="PRU00220"/>
    </source>
</evidence>
<evidence type="ECO:0000269" key="4">
    <source>
    </source>
</evidence>
<keyword id="KW-0217">Developmental protein</keyword>
<keyword id="KW-1185">Reference proteome</keyword>
<keyword id="KW-0677">Repeat</keyword>
<keyword id="KW-0964">Secreted</keyword>
<keyword id="KW-0732">Signal</keyword>
<keyword id="KW-0770">Synapse</keyword>
<sequence>MGPFLPAICVVLLALNAAVSPASVGPEDYPAADEAERTANNDIIFDDYRGKGCVDDSGFVYKLGERFFPGHSNCPCVCTEDGPVCDQPECPKIHPKCTKVEHNGCCPECKEVKNFCEYRGKTYKILEEFKPSPCEWCRCEPNNEVHCVVADCAVPECVNPVYEPEQCCPICKNGPNCFAGTTIIPAGIEVKVDDCTICRCHSGDWWKPAQCLRRECLNGQATS</sequence>